<gene>
    <name type="primary">TNFRSF6B</name>
    <name type="synonym">DCR3</name>
    <name type="synonym">TR6</name>
    <name type="ORF">UNQ186/PRO212</name>
</gene>
<protein>
    <recommendedName>
        <fullName>Tumor necrosis factor receptor superfamily member 6B</fullName>
    </recommendedName>
    <alternativeName>
        <fullName>Decoy receptor 3</fullName>
        <shortName>DcR3</shortName>
    </alternativeName>
    <alternativeName>
        <fullName>Decoy receptor for Fas ligand</fullName>
    </alternativeName>
    <alternativeName>
        <fullName>M68</fullName>
    </alternativeName>
</protein>
<evidence type="ECO:0000255" key="1"/>
<evidence type="ECO:0000255" key="2">
    <source>
        <dbReference type="PROSITE-ProRule" id="PRU00206"/>
    </source>
</evidence>
<evidence type="ECO:0000269" key="3">
    <source>
    </source>
</evidence>
<evidence type="ECO:0000269" key="4">
    <source>
    </source>
</evidence>
<evidence type="ECO:0007829" key="5">
    <source>
        <dbReference type="PDB" id="3K51"/>
    </source>
</evidence>
<evidence type="ECO:0007829" key="6">
    <source>
        <dbReference type="PDB" id="3MI8"/>
    </source>
</evidence>
<evidence type="ECO:0007829" key="7">
    <source>
        <dbReference type="PDB" id="4KGQ"/>
    </source>
</evidence>
<proteinExistence type="evidence at protein level"/>
<reference key="1">
    <citation type="journal article" date="1998" name="Nature">
        <title>Genomic amplification of a decoy receptor for Fas ligand in lung and colon cancer.</title>
        <authorList>
            <person name="Pitti R.M."/>
            <person name="Marsters S.A."/>
            <person name="Lawrence D.A."/>
            <person name="Roy M."/>
            <person name="Kischkel F.C."/>
            <person name="Dowd P."/>
            <person name="Huang A."/>
            <person name="Donahue C.J."/>
            <person name="Sherwood S.W."/>
            <person name="Baldwin D.T."/>
            <person name="Godowski P.J."/>
            <person name="Wood W.I."/>
            <person name="Gurney A.L."/>
            <person name="Hillan K.J."/>
            <person name="Cohen R.L."/>
            <person name="Goddard A.D."/>
            <person name="Botstein D."/>
            <person name="Ashkenazi A."/>
        </authorList>
    </citation>
    <scope>NUCLEOTIDE SEQUENCE [MRNA]</scope>
    <source>
        <tissue>Fetal lung</tissue>
    </source>
</reference>
<reference key="2">
    <citation type="journal article" date="1999" name="J. Biol. Chem.">
        <title>A newly identified member of tumor necrosis factor receptor superfamily (TR6) suppresses LIGHT-mediated apoptosis.</title>
        <authorList>
            <person name="Yu K.-Y."/>
            <person name="Kwon B."/>
            <person name="Ni J."/>
            <person name="Zhai Y."/>
            <person name="Ebner R."/>
            <person name="Kwon B.S."/>
        </authorList>
    </citation>
    <scope>NUCLEOTIDE SEQUENCE [MRNA]</scope>
    <scope>PROTEIN SEQUENCE OF 30-35</scope>
    <source>
        <tissue>Prostate</tissue>
    </source>
</reference>
<reference key="3">
    <citation type="journal article" date="2000" name="Proc. Natl. Acad. Sci. U.S.A.">
        <title>Overexpression of M68/DcR3 in human gastrointestinal tract tumors independent of gene amplification and its location in a four-gene cluster.</title>
        <authorList>
            <person name="Bai C."/>
            <person name="Connolly B."/>
            <person name="Metzker M.L."/>
            <person name="Hilliard C.A."/>
            <person name="Liu X."/>
            <person name="Sandig V."/>
            <person name="Soderman A."/>
            <person name="Galloway S.M."/>
            <person name="Liu Q."/>
            <person name="Austin C.P."/>
            <person name="Caskey C.T."/>
        </authorList>
    </citation>
    <scope>NUCLEOTIDE SEQUENCE [GENOMIC DNA / MRNA]</scope>
    <source>
        <tissue>Lung</tissue>
    </source>
</reference>
<reference key="4">
    <citation type="journal article" date="2003" name="Genome Res.">
        <title>The secreted protein discovery initiative (SPDI), a large-scale effort to identify novel human secreted and transmembrane proteins: a bioinformatics assessment.</title>
        <authorList>
            <person name="Clark H.F."/>
            <person name="Gurney A.L."/>
            <person name="Abaya E."/>
            <person name="Baker K."/>
            <person name="Baldwin D.T."/>
            <person name="Brush J."/>
            <person name="Chen J."/>
            <person name="Chow B."/>
            <person name="Chui C."/>
            <person name="Crowley C."/>
            <person name="Currell B."/>
            <person name="Deuel B."/>
            <person name="Dowd P."/>
            <person name="Eaton D."/>
            <person name="Foster J.S."/>
            <person name="Grimaldi C."/>
            <person name="Gu Q."/>
            <person name="Hass P.E."/>
            <person name="Heldens S."/>
            <person name="Huang A."/>
            <person name="Kim H.S."/>
            <person name="Klimowski L."/>
            <person name="Jin Y."/>
            <person name="Johnson S."/>
            <person name="Lee J."/>
            <person name="Lewis L."/>
            <person name="Liao D."/>
            <person name="Mark M.R."/>
            <person name="Robbie E."/>
            <person name="Sanchez C."/>
            <person name="Schoenfeld J."/>
            <person name="Seshagiri S."/>
            <person name="Simmons L."/>
            <person name="Singh J."/>
            <person name="Smith V."/>
            <person name="Stinson J."/>
            <person name="Vagts A."/>
            <person name="Vandlen R.L."/>
            <person name="Watanabe C."/>
            <person name="Wieand D."/>
            <person name="Woods K."/>
            <person name="Xie M.-H."/>
            <person name="Yansura D.G."/>
            <person name="Yi S."/>
            <person name="Yu G."/>
            <person name="Yuan J."/>
            <person name="Zhang M."/>
            <person name="Zhang Z."/>
            <person name="Goddard A.D."/>
            <person name="Wood W.I."/>
            <person name="Godowski P.J."/>
            <person name="Gray A.M."/>
        </authorList>
    </citation>
    <scope>NUCLEOTIDE SEQUENCE [LARGE SCALE MRNA]</scope>
</reference>
<reference key="5">
    <citation type="journal article" date="2001" name="Nature">
        <title>The DNA sequence and comparative analysis of human chromosome 20.</title>
        <authorList>
            <person name="Deloukas P."/>
            <person name="Matthews L.H."/>
            <person name="Ashurst J.L."/>
            <person name="Burton J."/>
            <person name="Gilbert J.G.R."/>
            <person name="Jones M."/>
            <person name="Stavrides G."/>
            <person name="Almeida J.P."/>
            <person name="Babbage A.K."/>
            <person name="Bagguley C.L."/>
            <person name="Bailey J."/>
            <person name="Barlow K.F."/>
            <person name="Bates K.N."/>
            <person name="Beard L.M."/>
            <person name="Beare D.M."/>
            <person name="Beasley O.P."/>
            <person name="Bird C.P."/>
            <person name="Blakey S.E."/>
            <person name="Bridgeman A.M."/>
            <person name="Brown A.J."/>
            <person name="Buck D."/>
            <person name="Burrill W.D."/>
            <person name="Butler A.P."/>
            <person name="Carder C."/>
            <person name="Carter N.P."/>
            <person name="Chapman J.C."/>
            <person name="Clamp M."/>
            <person name="Clark G."/>
            <person name="Clark L.N."/>
            <person name="Clark S.Y."/>
            <person name="Clee C.M."/>
            <person name="Clegg S."/>
            <person name="Cobley V.E."/>
            <person name="Collier R.E."/>
            <person name="Connor R.E."/>
            <person name="Corby N.R."/>
            <person name="Coulson A."/>
            <person name="Coville G.J."/>
            <person name="Deadman R."/>
            <person name="Dhami P.D."/>
            <person name="Dunn M."/>
            <person name="Ellington A.G."/>
            <person name="Frankland J.A."/>
            <person name="Fraser A."/>
            <person name="French L."/>
            <person name="Garner P."/>
            <person name="Grafham D.V."/>
            <person name="Griffiths C."/>
            <person name="Griffiths M.N.D."/>
            <person name="Gwilliam R."/>
            <person name="Hall R.E."/>
            <person name="Hammond S."/>
            <person name="Harley J.L."/>
            <person name="Heath P.D."/>
            <person name="Ho S."/>
            <person name="Holden J.L."/>
            <person name="Howden P.J."/>
            <person name="Huckle E."/>
            <person name="Hunt A.R."/>
            <person name="Hunt S.E."/>
            <person name="Jekosch K."/>
            <person name="Johnson C.M."/>
            <person name="Johnson D."/>
            <person name="Kay M.P."/>
            <person name="Kimberley A.M."/>
            <person name="King A."/>
            <person name="Knights A."/>
            <person name="Laird G.K."/>
            <person name="Lawlor S."/>
            <person name="Lehvaeslaiho M.H."/>
            <person name="Leversha M.A."/>
            <person name="Lloyd C."/>
            <person name="Lloyd D.M."/>
            <person name="Lovell J.D."/>
            <person name="Marsh V.L."/>
            <person name="Martin S.L."/>
            <person name="McConnachie L.J."/>
            <person name="McLay K."/>
            <person name="McMurray A.A."/>
            <person name="Milne S.A."/>
            <person name="Mistry D."/>
            <person name="Moore M.J.F."/>
            <person name="Mullikin J.C."/>
            <person name="Nickerson T."/>
            <person name="Oliver K."/>
            <person name="Parker A."/>
            <person name="Patel R."/>
            <person name="Pearce T.A.V."/>
            <person name="Peck A.I."/>
            <person name="Phillimore B.J.C.T."/>
            <person name="Prathalingam S.R."/>
            <person name="Plumb R.W."/>
            <person name="Ramsay H."/>
            <person name="Rice C.M."/>
            <person name="Ross M.T."/>
            <person name="Scott C.E."/>
            <person name="Sehra H.K."/>
            <person name="Shownkeen R."/>
            <person name="Sims S."/>
            <person name="Skuce C.D."/>
            <person name="Smith M.L."/>
            <person name="Soderlund C."/>
            <person name="Steward C.A."/>
            <person name="Sulston J.E."/>
            <person name="Swann R.M."/>
            <person name="Sycamore N."/>
            <person name="Taylor R."/>
            <person name="Tee L."/>
            <person name="Thomas D.W."/>
            <person name="Thorpe A."/>
            <person name="Tracey A."/>
            <person name="Tromans A.C."/>
            <person name="Vaudin M."/>
            <person name="Wall M."/>
            <person name="Wallis J.M."/>
            <person name="Whitehead S.L."/>
            <person name="Whittaker P."/>
            <person name="Willey D.L."/>
            <person name="Williams L."/>
            <person name="Williams S.A."/>
            <person name="Wilming L."/>
            <person name="Wray P.W."/>
            <person name="Hubbard T."/>
            <person name="Durbin R.M."/>
            <person name="Bentley D.R."/>
            <person name="Beck S."/>
            <person name="Rogers J."/>
        </authorList>
    </citation>
    <scope>NUCLEOTIDE SEQUENCE [LARGE SCALE GENOMIC DNA]</scope>
</reference>
<reference key="6">
    <citation type="journal article" date="2004" name="Genome Res.">
        <title>The status, quality, and expansion of the NIH full-length cDNA project: the Mammalian Gene Collection (MGC).</title>
        <authorList>
            <consortium name="The MGC Project Team"/>
        </authorList>
    </citation>
    <scope>NUCLEOTIDE SEQUENCE [LARGE SCALE MRNA]</scope>
    <source>
        <tissue>Lung</tissue>
        <tissue>Skin</tissue>
    </source>
</reference>
<reference key="7">
    <citation type="journal article" date="2011" name="Structure">
        <title>Decoy strategies: the structure of TL1A:DcR3 complex.</title>
        <authorList>
            <person name="Zhan C."/>
            <person name="Patskovsky Y."/>
            <person name="Yan Q."/>
            <person name="Li Z."/>
            <person name="Ramagopal U."/>
            <person name="Cheng H."/>
            <person name="Brenowitz M."/>
            <person name="Hui X."/>
            <person name="Nathenson S.G."/>
            <person name="Almo S.C."/>
        </authorList>
    </citation>
    <scope>X-RAY CRYSTALLOGRAPHY (2.45 ANGSTROMS) OF 30-195 IN COMPLEX WITH TNFSF15</scope>
    <scope>FUNCTION</scope>
    <scope>DISULFIDE BONDS</scope>
</reference>
<keyword id="KW-0002">3D-structure</keyword>
<keyword id="KW-0053">Apoptosis</keyword>
<keyword id="KW-0903">Direct protein sequencing</keyword>
<keyword id="KW-1015">Disulfide bond</keyword>
<keyword id="KW-0325">Glycoprotein</keyword>
<keyword id="KW-1267">Proteomics identification</keyword>
<keyword id="KW-0675">Receptor</keyword>
<keyword id="KW-1185">Reference proteome</keyword>
<keyword id="KW-0677">Repeat</keyword>
<keyword id="KW-0964">Secreted</keyword>
<keyword id="KW-0732">Signal</keyword>
<feature type="signal peptide" evidence="3">
    <location>
        <begin position="1"/>
        <end position="29"/>
    </location>
</feature>
<feature type="chain" id="PRO_0000034570" description="Tumor necrosis factor receptor superfamily member 6B">
    <location>
        <begin position="30"/>
        <end position="300"/>
    </location>
</feature>
<feature type="repeat" description="TNFR-Cys 1">
    <location>
        <begin position="31"/>
        <end position="70"/>
    </location>
</feature>
<feature type="repeat" description="TNFR-Cys 2">
    <location>
        <begin position="72"/>
        <end position="113"/>
    </location>
</feature>
<feature type="repeat" description="TNFR-Cys 3">
    <location>
        <begin position="115"/>
        <end position="150"/>
    </location>
</feature>
<feature type="repeat" description="TNFR-Cys 4">
    <location>
        <begin position="152"/>
        <end position="193"/>
    </location>
</feature>
<feature type="glycosylation site" description="N-linked (GlcNAc...) asparagine" evidence="1">
    <location>
        <position position="173"/>
    </location>
</feature>
<feature type="disulfide bond" evidence="2 4">
    <location>
        <begin position="49"/>
        <end position="62"/>
    </location>
</feature>
<feature type="disulfide bond" evidence="2 4">
    <location>
        <begin position="52"/>
        <end position="70"/>
    </location>
</feature>
<feature type="disulfide bond" evidence="2 4">
    <location>
        <begin position="73"/>
        <end position="88"/>
    </location>
</feature>
<feature type="disulfide bond" evidence="2 4">
    <location>
        <begin position="91"/>
        <end position="105"/>
    </location>
</feature>
<feature type="disulfide bond" evidence="2 4">
    <location>
        <begin position="95"/>
        <end position="113"/>
    </location>
</feature>
<feature type="disulfide bond" evidence="2 4">
    <location>
        <begin position="115"/>
        <end position="126"/>
    </location>
</feature>
<feature type="disulfide bond" evidence="2 4">
    <location>
        <begin position="132"/>
        <end position="150"/>
    </location>
</feature>
<feature type="disulfide bond" evidence="2 4">
    <location>
        <begin position="153"/>
        <end position="168"/>
    </location>
</feature>
<feature type="disulfide bond" evidence="2 4">
    <location>
        <begin position="174"/>
        <end position="193"/>
    </location>
</feature>
<feature type="strand" evidence="7">
    <location>
        <begin position="35"/>
        <end position="39"/>
    </location>
</feature>
<feature type="turn" evidence="7">
    <location>
        <begin position="41"/>
        <end position="43"/>
    </location>
</feature>
<feature type="strand" evidence="7">
    <location>
        <begin position="46"/>
        <end position="50"/>
    </location>
</feature>
<feature type="strand" evidence="7">
    <location>
        <begin position="56"/>
        <end position="60"/>
    </location>
</feature>
<feature type="strand" evidence="7">
    <location>
        <begin position="64"/>
        <end position="66"/>
    </location>
</feature>
<feature type="strand" evidence="7">
    <location>
        <begin position="69"/>
        <end position="72"/>
    </location>
</feature>
<feature type="strand" evidence="7">
    <location>
        <begin position="81"/>
        <end position="83"/>
    </location>
</feature>
<feature type="strand" evidence="7">
    <location>
        <begin position="99"/>
        <end position="103"/>
    </location>
</feature>
<feature type="strand" evidence="6">
    <location>
        <begin position="107"/>
        <end position="109"/>
    </location>
</feature>
<feature type="strand" evidence="7">
    <location>
        <begin position="112"/>
        <end position="115"/>
    </location>
</feature>
<feature type="strand" evidence="7">
    <location>
        <begin position="119"/>
        <end position="122"/>
    </location>
</feature>
<feature type="strand" evidence="7">
    <location>
        <begin position="125"/>
        <end position="128"/>
    </location>
</feature>
<feature type="strand" evidence="7">
    <location>
        <begin position="136"/>
        <end position="140"/>
    </location>
</feature>
<feature type="strand" evidence="7">
    <location>
        <begin position="144"/>
        <end position="146"/>
    </location>
</feature>
<feature type="strand" evidence="7">
    <location>
        <begin position="149"/>
        <end position="152"/>
    </location>
</feature>
<feature type="strand" evidence="7">
    <location>
        <begin position="163"/>
        <end position="165"/>
    </location>
</feature>
<feature type="helix" evidence="7">
    <location>
        <begin position="174"/>
        <end position="177"/>
    </location>
</feature>
<feature type="strand" evidence="7">
    <location>
        <begin position="181"/>
        <end position="183"/>
    </location>
</feature>
<feature type="strand" evidence="5">
    <location>
        <begin position="186"/>
        <end position="189"/>
    </location>
</feature>
<feature type="strand" evidence="5">
    <location>
        <begin position="191"/>
        <end position="193"/>
    </location>
</feature>
<sequence>MRALEGPGLSLLCLVLALPALLPVPAVRGVAETPTYPWRDAETGERLVCAQCPPGTFVQRPCRRDSPTTCGPCPPRHYTQFWNYLERCRYCNVLCGEREEEARACHATHNRACRCRTGFFAHAGFCLEHASCPPGAGVIAPGTPSQNTQCQPCPPGTFSASSSSSEQCQPHRNCTALGLALNVPGSSSHDTLCTSCTGFPLSTRVPGAEECERAVIDFVAFQDISIKRLQRLLQALEAPEGWGPTPRAGRAALQLKLRRRLTELLGAQDGALLVRLLQALRVARMPGLERSVRERFLPVH</sequence>
<name>TNF6B_HUMAN</name>
<dbReference type="EMBL" id="AF104419">
    <property type="protein sequence ID" value="AAD03056.1"/>
    <property type="molecule type" value="mRNA"/>
</dbReference>
<dbReference type="EMBL" id="AF134240">
    <property type="protein sequence ID" value="AAD29688.1"/>
    <property type="molecule type" value="mRNA"/>
</dbReference>
<dbReference type="EMBL" id="AF217796">
    <property type="protein sequence ID" value="AAF35244.1"/>
    <property type="molecule type" value="Genomic_DNA"/>
</dbReference>
<dbReference type="EMBL" id="AF217793">
    <property type="protein sequence ID" value="AAF33685.1"/>
    <property type="molecule type" value="mRNA"/>
</dbReference>
<dbReference type="EMBL" id="AF217794">
    <property type="protein sequence ID" value="AAF33686.1"/>
    <property type="molecule type" value="mRNA"/>
</dbReference>
<dbReference type="EMBL" id="AY358279">
    <property type="protein sequence ID" value="AAQ88646.1"/>
    <property type="molecule type" value="mRNA"/>
</dbReference>
<dbReference type="EMBL" id="AL121845">
    <property type="status" value="NOT_ANNOTATED_CDS"/>
    <property type="molecule type" value="Genomic_DNA"/>
</dbReference>
<dbReference type="EMBL" id="BC017065">
    <property type="protein sequence ID" value="AAH17065.1"/>
    <property type="molecule type" value="mRNA"/>
</dbReference>
<dbReference type="EMBL" id="BC034349">
    <property type="protein sequence ID" value="AAH34349.1"/>
    <property type="molecule type" value="mRNA"/>
</dbReference>
<dbReference type="CCDS" id="CCDS13532.1"/>
<dbReference type="RefSeq" id="NP_003814.1">
    <property type="nucleotide sequence ID" value="NM_003823.4"/>
</dbReference>
<dbReference type="PDB" id="3K51">
    <property type="method" value="X-ray"/>
    <property type="resolution" value="2.45 A"/>
    <property type="chains" value="B=30-195"/>
</dbReference>
<dbReference type="PDB" id="3MHD">
    <property type="method" value="X-ray"/>
    <property type="resolution" value="2.90 A"/>
    <property type="chains" value="D=30-195"/>
</dbReference>
<dbReference type="PDB" id="3MI8">
    <property type="method" value="X-ray"/>
    <property type="resolution" value="2.95 A"/>
    <property type="chains" value="D=30-195"/>
</dbReference>
<dbReference type="PDB" id="4J6G">
    <property type="method" value="X-ray"/>
    <property type="resolution" value="2.40 A"/>
    <property type="chains" value="C/D=30-195"/>
</dbReference>
<dbReference type="PDB" id="4KGG">
    <property type="method" value="X-ray"/>
    <property type="resolution" value="2.78 A"/>
    <property type="chains" value="C/D=30-195"/>
</dbReference>
<dbReference type="PDB" id="4KGQ">
    <property type="method" value="X-ray"/>
    <property type="resolution" value="2.27 A"/>
    <property type="chains" value="C/D=30-195"/>
</dbReference>
<dbReference type="PDB" id="4MSV">
    <property type="method" value="X-ray"/>
    <property type="resolution" value="2.50 A"/>
    <property type="chains" value="B=30-195"/>
</dbReference>
<dbReference type="PDB" id="5L36">
    <property type="method" value="X-ray"/>
    <property type="resolution" value="3.10 A"/>
    <property type="chains" value="B=30-195"/>
</dbReference>
<dbReference type="PDBsum" id="3K51"/>
<dbReference type="PDBsum" id="3MHD"/>
<dbReference type="PDBsum" id="3MI8"/>
<dbReference type="PDBsum" id="4J6G"/>
<dbReference type="PDBsum" id="4KGG"/>
<dbReference type="PDBsum" id="4KGQ"/>
<dbReference type="PDBsum" id="4MSV"/>
<dbReference type="PDBsum" id="5L36"/>
<dbReference type="SMR" id="O95407"/>
<dbReference type="BioGRID" id="114301">
    <property type="interactions" value="62"/>
</dbReference>
<dbReference type="ComplexPortal" id="CPX-9309">
    <property type="entry name" value="TNFSF14-TNFRSF6B receptor-ligand complex"/>
</dbReference>
<dbReference type="FunCoup" id="O95407">
    <property type="interactions" value="502"/>
</dbReference>
<dbReference type="IntAct" id="O95407">
    <property type="interactions" value="28"/>
</dbReference>
<dbReference type="STRING" id="9606.ENSP00000359013"/>
<dbReference type="GlyCosmos" id="O95407">
    <property type="glycosylation" value="2 sites, 1 glycan"/>
</dbReference>
<dbReference type="GlyGen" id="O95407">
    <property type="glycosylation" value="3 sites, 1 O-linked glycan (1 site)"/>
</dbReference>
<dbReference type="iPTMnet" id="O95407"/>
<dbReference type="PhosphoSitePlus" id="O95407"/>
<dbReference type="BioMuta" id="TNFRSF6B"/>
<dbReference type="jPOST" id="O95407"/>
<dbReference type="MassIVE" id="O95407"/>
<dbReference type="PaxDb" id="9606-ENSP00000359013"/>
<dbReference type="PeptideAtlas" id="O95407"/>
<dbReference type="ProteomicsDB" id="50860"/>
<dbReference type="Antibodypedia" id="35008">
    <property type="antibodies" value="324 antibodies from 37 providers"/>
</dbReference>
<dbReference type="DNASU" id="8771"/>
<dbReference type="Ensembl" id="ENST00000369996.3">
    <property type="protein sequence ID" value="ENSP00000359013.1"/>
    <property type="gene ID" value="ENSG00000243509.6"/>
</dbReference>
<dbReference type="GeneID" id="8771"/>
<dbReference type="KEGG" id="hsa:8771"/>
<dbReference type="MANE-Select" id="ENST00000369996.3">
    <property type="protein sequence ID" value="ENSP00000359013.1"/>
    <property type="RefSeq nucleotide sequence ID" value="NM_003823.4"/>
    <property type="RefSeq protein sequence ID" value="NP_003814.1"/>
</dbReference>
<dbReference type="UCSC" id="uc002yfz.4">
    <property type="organism name" value="human"/>
</dbReference>
<dbReference type="AGR" id="HGNC:11921"/>
<dbReference type="CTD" id="8771"/>
<dbReference type="DisGeNET" id="8771"/>
<dbReference type="GeneCards" id="TNFRSF6B"/>
<dbReference type="HGNC" id="HGNC:11921">
    <property type="gene designation" value="TNFRSF6B"/>
</dbReference>
<dbReference type="HPA" id="ENSG00000243509">
    <property type="expression patterns" value="Tissue enhanced (lung)"/>
</dbReference>
<dbReference type="MalaCards" id="TNFRSF6B"/>
<dbReference type="MIM" id="603361">
    <property type="type" value="gene"/>
</dbReference>
<dbReference type="neXtProt" id="NX_O95407"/>
<dbReference type="OpenTargets" id="ENSG00000243509"/>
<dbReference type="PharmGKB" id="PA36614"/>
<dbReference type="VEuPathDB" id="HostDB:ENSG00000243509"/>
<dbReference type="eggNOG" id="ENOG502RZKS">
    <property type="taxonomic scope" value="Eukaryota"/>
</dbReference>
<dbReference type="GeneTree" id="ENSGT00940000162635"/>
<dbReference type="HOGENOM" id="CLU_057708_2_0_1"/>
<dbReference type="InParanoid" id="O95407"/>
<dbReference type="OMA" id="PCQPHQD"/>
<dbReference type="PAN-GO" id="O95407">
    <property type="GO annotations" value="0 GO annotations based on evolutionary models"/>
</dbReference>
<dbReference type="PhylomeDB" id="O95407"/>
<dbReference type="TreeFam" id="TF331157"/>
<dbReference type="PathwayCommons" id="O95407"/>
<dbReference type="Reactome" id="R-HSA-5669034">
    <property type="pathway name" value="TNFs bind their physiological receptors"/>
</dbReference>
<dbReference type="SignaLink" id="O95407"/>
<dbReference type="SIGNOR" id="O95407"/>
<dbReference type="BioGRID-ORCS" id="8771">
    <property type="hits" value="14 hits in 1141 CRISPR screens"/>
</dbReference>
<dbReference type="EvolutionaryTrace" id="O95407"/>
<dbReference type="GeneWiki" id="TNFRSF6B"/>
<dbReference type="GenomeRNAi" id="8771"/>
<dbReference type="Pharos" id="O95407">
    <property type="development level" value="Tbio"/>
</dbReference>
<dbReference type="PRO" id="PR:O95407"/>
<dbReference type="Proteomes" id="UP000005640">
    <property type="component" value="Chromosome 20"/>
</dbReference>
<dbReference type="RNAct" id="O95407">
    <property type="molecule type" value="protein"/>
</dbReference>
<dbReference type="Bgee" id="ENSG00000243509">
    <property type="expression patterns" value="Expressed in olfactory segment of nasal mucosa and 89 other cell types or tissues"/>
</dbReference>
<dbReference type="GO" id="GO:0005576">
    <property type="term" value="C:extracellular region"/>
    <property type="evidence" value="ECO:0000304"/>
    <property type="project" value="Reactome"/>
</dbReference>
<dbReference type="GO" id="GO:0005615">
    <property type="term" value="C:extracellular space"/>
    <property type="evidence" value="ECO:0000303"/>
    <property type="project" value="UniProtKB"/>
</dbReference>
<dbReference type="GO" id="GO:0038023">
    <property type="term" value="F:signaling receptor activity"/>
    <property type="evidence" value="ECO:0000304"/>
    <property type="project" value="ProtInc"/>
</dbReference>
<dbReference type="GO" id="GO:0006915">
    <property type="term" value="P:apoptotic process"/>
    <property type="evidence" value="ECO:0007669"/>
    <property type="project" value="UniProtKB-KW"/>
</dbReference>
<dbReference type="GO" id="GO:0043066">
    <property type="term" value="P:negative regulation of apoptotic process"/>
    <property type="evidence" value="ECO:0000304"/>
    <property type="project" value="ProtInc"/>
</dbReference>
<dbReference type="CDD" id="cd10575">
    <property type="entry name" value="TNFRSF6B"/>
    <property type="match status" value="1"/>
</dbReference>
<dbReference type="FunFam" id="2.10.50.10:FF:000014">
    <property type="entry name" value="Tumor necrosis factor receptor superfamily member 11B"/>
    <property type="match status" value="1"/>
</dbReference>
<dbReference type="Gene3D" id="2.10.50.10">
    <property type="entry name" value="Tumor Necrosis Factor Receptor, subunit A, domain 2"/>
    <property type="match status" value="3"/>
</dbReference>
<dbReference type="InterPro" id="IPR001368">
    <property type="entry name" value="TNFR/NGFR_Cys_rich_reg"/>
</dbReference>
<dbReference type="InterPro" id="IPR034023">
    <property type="entry name" value="TNFRSF6B_N"/>
</dbReference>
<dbReference type="InterPro" id="IPR052459">
    <property type="entry name" value="TNFRSF_decoy_receptor"/>
</dbReference>
<dbReference type="PANTHER" id="PTHR23097">
    <property type="entry name" value="TUMOR NECROSIS FACTOR RECEPTOR SUPERFAMILY MEMBER"/>
    <property type="match status" value="1"/>
</dbReference>
<dbReference type="PANTHER" id="PTHR23097:SF116">
    <property type="entry name" value="TUMOR NECROSIS FACTOR RECEPTOR SUPERFAMILY MEMBER 6B"/>
    <property type="match status" value="1"/>
</dbReference>
<dbReference type="Pfam" id="PF00020">
    <property type="entry name" value="TNFR_c6"/>
    <property type="match status" value="3"/>
</dbReference>
<dbReference type="SMART" id="SM00208">
    <property type="entry name" value="TNFR"/>
    <property type="match status" value="4"/>
</dbReference>
<dbReference type="SUPFAM" id="SSF57586">
    <property type="entry name" value="TNF receptor-like"/>
    <property type="match status" value="2"/>
</dbReference>
<dbReference type="PROSITE" id="PS00652">
    <property type="entry name" value="TNFR_NGFR_1"/>
    <property type="match status" value="1"/>
</dbReference>
<dbReference type="PROSITE" id="PS50050">
    <property type="entry name" value="TNFR_NGFR_2"/>
    <property type="match status" value="2"/>
</dbReference>
<accession>O95407</accession>
<organism>
    <name type="scientific">Homo sapiens</name>
    <name type="common">Human</name>
    <dbReference type="NCBI Taxonomy" id="9606"/>
    <lineage>
        <taxon>Eukaryota</taxon>
        <taxon>Metazoa</taxon>
        <taxon>Chordata</taxon>
        <taxon>Craniata</taxon>
        <taxon>Vertebrata</taxon>
        <taxon>Euteleostomi</taxon>
        <taxon>Mammalia</taxon>
        <taxon>Eutheria</taxon>
        <taxon>Euarchontoglires</taxon>
        <taxon>Primates</taxon>
        <taxon>Haplorrhini</taxon>
        <taxon>Catarrhini</taxon>
        <taxon>Hominidae</taxon>
        <taxon>Homo</taxon>
    </lineage>
</organism>
<comment type="function">
    <text evidence="4">Decoy receptor that can neutralize the cytotoxic ligands TNFS14/LIGHT, TNFSF15 and TNFSF6/FASL. Protects against apoptosis.</text>
</comment>
<comment type="interaction">
    <interactant intactId="EBI-524171">
        <id>O95407</id>
    </interactant>
    <interactant intactId="EBI-10172052">
        <id>P60411</id>
        <label>KRTAP10-9</label>
    </interactant>
    <organismsDiffer>false</organismsDiffer>
    <experiments>3</experiments>
</comment>
<comment type="interaction">
    <interactant intactId="EBI-524171">
        <id>O95407</id>
    </interactant>
    <interactant intactId="EBI-524131">
        <id>O43557</id>
        <label>TNFSF14</label>
    </interactant>
    <organismsDiffer>false</organismsDiffer>
    <experiments>2</experiments>
</comment>
<comment type="interaction">
    <interactant intactId="EBI-524171">
        <id>O95407</id>
    </interactant>
    <interactant intactId="EBI-15910661">
        <id>O43557-1</id>
        <label>TNFSF14</label>
    </interactant>
    <organismsDiffer>false</organismsDiffer>
    <experiments>4</experiments>
</comment>
<comment type="interaction">
    <interactant intactId="EBI-524171">
        <id>O95407</id>
    </interactant>
    <interactant intactId="EBI-15910629">
        <id>O95150-1</id>
        <label>TNFSF15</label>
    </interactant>
    <organismsDiffer>false</organismsDiffer>
    <experiments>3</experiments>
</comment>
<comment type="subcellular location">
    <subcellularLocation>
        <location>Secreted</location>
    </subcellularLocation>
</comment>
<comment type="tissue specificity">
    <text>Detected in fetal lung, brain and liver. Detected in adult stomach, spinal cord, lymph node, trachea, spleen, colon and lung. Highly expressed in several primary tumors from colon, stomach, rectum, esophagus and in SW480 colon carcinoma cells.</text>
</comment>
<comment type="online information" name="Atlas of Genetics and Cytogenetics in Oncology and Haematology">
    <link uri="https://atlasgeneticsoncology.org/gene/42628/TNFRSF6B"/>
</comment>